<protein>
    <recommendedName>
        <fullName evidence="1">Protein FixB</fullName>
    </recommendedName>
</protein>
<keyword id="KW-0249">Electron transport</keyword>
<keyword id="KW-0274">FAD</keyword>
<keyword id="KW-0285">Flavoprotein</keyword>
<keyword id="KW-1185">Reference proteome</keyword>
<keyword id="KW-0813">Transport</keyword>
<comment type="function">
    <text evidence="1">Required for anaerobic carnitine reduction. May bring reductant to CaiA.</text>
</comment>
<comment type="pathway">
    <text evidence="1">Amine and polyamine metabolism; carnitine metabolism.</text>
</comment>
<comment type="subunit">
    <text evidence="1">Heterodimer of FixA and FixB.</text>
</comment>
<comment type="similarity">
    <text evidence="1">Belongs to the ETF alpha-subunit/FixB family.</text>
</comment>
<evidence type="ECO:0000255" key="1">
    <source>
        <dbReference type="HAMAP-Rule" id="MF_01056"/>
    </source>
</evidence>
<name>FIXB_SHISS</name>
<dbReference type="EMBL" id="CP000038">
    <property type="protein sequence ID" value="AAZ86846.1"/>
    <property type="molecule type" value="Genomic_DNA"/>
</dbReference>
<dbReference type="RefSeq" id="WP_001091499.1">
    <property type="nucleotide sequence ID" value="NC_007384.1"/>
</dbReference>
<dbReference type="SMR" id="Q3Z5W6"/>
<dbReference type="KEGG" id="ssn:SSON_0050"/>
<dbReference type="HOGENOM" id="CLU_034178_0_1_6"/>
<dbReference type="UniPathway" id="UPA00117"/>
<dbReference type="Proteomes" id="UP000002529">
    <property type="component" value="Chromosome"/>
</dbReference>
<dbReference type="GO" id="GO:0009055">
    <property type="term" value="F:electron transfer activity"/>
    <property type="evidence" value="ECO:0007669"/>
    <property type="project" value="InterPro"/>
</dbReference>
<dbReference type="GO" id="GO:0050660">
    <property type="term" value="F:flavin adenine dinucleotide binding"/>
    <property type="evidence" value="ECO:0007669"/>
    <property type="project" value="InterPro"/>
</dbReference>
<dbReference type="GO" id="GO:0009437">
    <property type="term" value="P:carnitine metabolic process"/>
    <property type="evidence" value="ECO:0007669"/>
    <property type="project" value="UniProtKB-UniRule"/>
</dbReference>
<dbReference type="GO" id="GO:0033539">
    <property type="term" value="P:fatty acid beta-oxidation using acyl-CoA dehydrogenase"/>
    <property type="evidence" value="ECO:0007669"/>
    <property type="project" value="TreeGrafter"/>
</dbReference>
<dbReference type="FunFam" id="3.40.50.1220:FF:000004">
    <property type="entry name" value="Electron transfer flavoprotein"/>
    <property type="match status" value="1"/>
</dbReference>
<dbReference type="FunFam" id="3.40.50.620:FF:000067">
    <property type="entry name" value="Protein FixB"/>
    <property type="match status" value="1"/>
</dbReference>
<dbReference type="Gene3D" id="3.40.50.620">
    <property type="entry name" value="HUPs"/>
    <property type="match status" value="1"/>
</dbReference>
<dbReference type="Gene3D" id="3.40.50.1220">
    <property type="entry name" value="TPP-binding domain"/>
    <property type="match status" value="1"/>
</dbReference>
<dbReference type="HAMAP" id="MF_01056">
    <property type="entry name" value="FixB"/>
    <property type="match status" value="1"/>
</dbReference>
<dbReference type="InterPro" id="IPR029035">
    <property type="entry name" value="DHS-like_NAD/FAD-binding_dom"/>
</dbReference>
<dbReference type="InterPro" id="IPR014730">
    <property type="entry name" value="ETF_a/b_N"/>
</dbReference>
<dbReference type="InterPro" id="IPR001308">
    <property type="entry name" value="ETF_a/FixB"/>
</dbReference>
<dbReference type="InterPro" id="IPR014731">
    <property type="entry name" value="ETF_asu_C"/>
</dbReference>
<dbReference type="InterPro" id="IPR018206">
    <property type="entry name" value="ETF_asu_C_CS"/>
</dbReference>
<dbReference type="InterPro" id="IPR023461">
    <property type="entry name" value="FixB"/>
</dbReference>
<dbReference type="InterPro" id="IPR014729">
    <property type="entry name" value="Rossmann-like_a/b/a_fold"/>
</dbReference>
<dbReference type="NCBIfam" id="NF002889">
    <property type="entry name" value="PRK03363.1"/>
    <property type="match status" value="1"/>
</dbReference>
<dbReference type="PANTHER" id="PTHR43153">
    <property type="entry name" value="ELECTRON TRANSFER FLAVOPROTEIN ALPHA"/>
    <property type="match status" value="1"/>
</dbReference>
<dbReference type="PANTHER" id="PTHR43153:SF5">
    <property type="entry name" value="PROTEIN FIXB-RELATED"/>
    <property type="match status" value="1"/>
</dbReference>
<dbReference type="Pfam" id="PF01012">
    <property type="entry name" value="ETF"/>
    <property type="match status" value="1"/>
</dbReference>
<dbReference type="Pfam" id="PF00766">
    <property type="entry name" value="ETF_alpha"/>
    <property type="match status" value="1"/>
</dbReference>
<dbReference type="PIRSF" id="PIRSF000089">
    <property type="entry name" value="Electra_flavoP_a"/>
    <property type="match status" value="1"/>
</dbReference>
<dbReference type="SMART" id="SM00893">
    <property type="entry name" value="ETF"/>
    <property type="match status" value="1"/>
</dbReference>
<dbReference type="SUPFAM" id="SSF52402">
    <property type="entry name" value="Adenine nucleotide alpha hydrolases-like"/>
    <property type="match status" value="1"/>
</dbReference>
<dbReference type="SUPFAM" id="SSF52467">
    <property type="entry name" value="DHS-like NAD/FAD-binding domain"/>
    <property type="match status" value="1"/>
</dbReference>
<dbReference type="PROSITE" id="PS00696">
    <property type="entry name" value="ETF_ALPHA"/>
    <property type="match status" value="1"/>
</dbReference>
<gene>
    <name evidence="1" type="primary">fixB</name>
    <name type="ordered locus">SSON_0050</name>
</gene>
<accession>Q3Z5W6</accession>
<reference key="1">
    <citation type="journal article" date="2005" name="Nucleic Acids Res.">
        <title>Genome dynamics and diversity of Shigella species, the etiologic agents of bacillary dysentery.</title>
        <authorList>
            <person name="Yang F."/>
            <person name="Yang J."/>
            <person name="Zhang X."/>
            <person name="Chen L."/>
            <person name="Jiang Y."/>
            <person name="Yan Y."/>
            <person name="Tang X."/>
            <person name="Wang J."/>
            <person name="Xiong Z."/>
            <person name="Dong J."/>
            <person name="Xue Y."/>
            <person name="Zhu Y."/>
            <person name="Xu X."/>
            <person name="Sun L."/>
            <person name="Chen S."/>
            <person name="Nie H."/>
            <person name="Peng J."/>
            <person name="Xu J."/>
            <person name="Wang Y."/>
            <person name="Yuan Z."/>
            <person name="Wen Y."/>
            <person name="Yao Z."/>
            <person name="Shen Y."/>
            <person name="Qiang B."/>
            <person name="Hou Y."/>
            <person name="Yu J."/>
            <person name="Jin Q."/>
        </authorList>
    </citation>
    <scope>NUCLEOTIDE SEQUENCE [LARGE SCALE GENOMIC DNA]</scope>
    <source>
        <strain>Ss046</strain>
    </source>
</reference>
<organism>
    <name type="scientific">Shigella sonnei (strain Ss046)</name>
    <dbReference type="NCBI Taxonomy" id="300269"/>
    <lineage>
        <taxon>Bacteria</taxon>
        <taxon>Pseudomonadati</taxon>
        <taxon>Pseudomonadota</taxon>
        <taxon>Gammaproteobacteria</taxon>
        <taxon>Enterobacterales</taxon>
        <taxon>Enterobacteriaceae</taxon>
        <taxon>Shigella</taxon>
    </lineage>
</organism>
<sequence length="313" mass="33513">MNTFSQVWVFSDTPSRLPELMNGAQALANQINTFVLNDADGAQAIQLGANHVWKLNGKPDDRMIEDYAGVMADTIRQHGADGLVLLPNTRRGKLLAAKLGYRLKAAVSNDASTVSVQDGKATVKHMVYGGLAIGEERIATPYAVLTISSGTFDAAQPDASRTGETHTVEWQAPAVAITRTATQARQSNSVDLDKARLVVSVGRGIGSKENIALAEQLCKAIGAELACSRPVAENEKWMEHERYVGISNLMLKPELYLAVGISGQIQHMVGANASQTIFAINKDKNAPIFQYADYGIVGDAVKILPALTAALAR</sequence>
<proteinExistence type="inferred from homology"/>
<feature type="chain" id="PRO_0000300967" description="Protein FixB">
    <location>
        <begin position="1"/>
        <end position="313"/>
    </location>
</feature>
<feature type="binding site" evidence="1">
    <location>
        <begin position="255"/>
        <end position="283"/>
    </location>
    <ligand>
        <name>FAD</name>
        <dbReference type="ChEBI" id="CHEBI:57692"/>
    </ligand>
</feature>